<sequence>MAELKPLIAKVANGESLNREDARTAFDILMSGEATPSQIGGFLMALRVRGETVDEIVGAVSSMRARMLPVSAPANAIDIVGTGGDGIGTYNISTLASIITAGTGLPVAKHGNRALSSKSGTADALSALGVRLDIGPDLIARCIAEAGLGFMFAQMHHSAMRHVGPSRVELGTRTIFNLLGPLSNPAGAKRQLLGVFSPRWLVPLAEVLRDLGSESIWVVHGDGMDEVTTTGVTHVAALEDGKIRTFDLTPKDFGVEPALMNDLKGGDGIANAAALREVLSGKRNAYRDISLCNAAAALVIAGKAETLSQAMTIASDALDSGKAAAALDRLVAVSNEANSGQE</sequence>
<keyword id="KW-0028">Amino-acid biosynthesis</keyword>
<keyword id="KW-0057">Aromatic amino acid biosynthesis</keyword>
<keyword id="KW-0328">Glycosyltransferase</keyword>
<keyword id="KW-0460">Magnesium</keyword>
<keyword id="KW-0479">Metal-binding</keyword>
<keyword id="KW-1185">Reference proteome</keyword>
<keyword id="KW-0808">Transferase</keyword>
<keyword id="KW-0822">Tryptophan biosynthesis</keyword>
<evidence type="ECO:0000255" key="1">
    <source>
        <dbReference type="HAMAP-Rule" id="MF_00211"/>
    </source>
</evidence>
<protein>
    <recommendedName>
        <fullName evidence="1">Anthranilate phosphoribosyltransferase</fullName>
        <ecNumber evidence="1">2.4.2.18</ecNumber>
    </recommendedName>
</protein>
<gene>
    <name evidence="1" type="primary">trpD</name>
    <name type="ordered locus">Atu1687</name>
    <name type="ORF">AGR_C_3100</name>
</gene>
<name>TRPD_AGRFC</name>
<organism>
    <name type="scientific">Agrobacterium fabrum (strain C58 / ATCC 33970)</name>
    <name type="common">Agrobacterium tumefaciens (strain C58)</name>
    <dbReference type="NCBI Taxonomy" id="176299"/>
    <lineage>
        <taxon>Bacteria</taxon>
        <taxon>Pseudomonadati</taxon>
        <taxon>Pseudomonadota</taxon>
        <taxon>Alphaproteobacteria</taxon>
        <taxon>Hyphomicrobiales</taxon>
        <taxon>Rhizobiaceae</taxon>
        <taxon>Rhizobium/Agrobacterium group</taxon>
        <taxon>Agrobacterium</taxon>
        <taxon>Agrobacterium tumefaciens complex</taxon>
    </lineage>
</organism>
<feature type="chain" id="PRO_0000154418" description="Anthranilate phosphoribosyltransferase">
    <location>
        <begin position="1"/>
        <end position="342"/>
    </location>
</feature>
<feature type="binding site" evidence="1">
    <location>
        <position position="81"/>
    </location>
    <ligand>
        <name>5-phospho-alpha-D-ribose 1-diphosphate</name>
        <dbReference type="ChEBI" id="CHEBI:58017"/>
    </ligand>
</feature>
<feature type="binding site" evidence="1">
    <location>
        <position position="81"/>
    </location>
    <ligand>
        <name>anthranilate</name>
        <dbReference type="ChEBI" id="CHEBI:16567"/>
        <label>1</label>
    </ligand>
</feature>
<feature type="binding site" evidence="1">
    <location>
        <begin position="84"/>
        <end position="85"/>
    </location>
    <ligand>
        <name>5-phospho-alpha-D-ribose 1-diphosphate</name>
        <dbReference type="ChEBI" id="CHEBI:58017"/>
    </ligand>
</feature>
<feature type="binding site" evidence="1">
    <location>
        <position position="89"/>
    </location>
    <ligand>
        <name>5-phospho-alpha-D-ribose 1-diphosphate</name>
        <dbReference type="ChEBI" id="CHEBI:58017"/>
    </ligand>
</feature>
<feature type="binding site" evidence="1">
    <location>
        <begin position="91"/>
        <end position="94"/>
    </location>
    <ligand>
        <name>5-phospho-alpha-D-ribose 1-diphosphate</name>
        <dbReference type="ChEBI" id="CHEBI:58017"/>
    </ligand>
</feature>
<feature type="binding site" evidence="1">
    <location>
        <position position="93"/>
    </location>
    <ligand>
        <name>Mg(2+)</name>
        <dbReference type="ChEBI" id="CHEBI:18420"/>
        <label>1</label>
    </ligand>
</feature>
<feature type="binding site" evidence="1">
    <location>
        <begin position="109"/>
        <end position="117"/>
    </location>
    <ligand>
        <name>5-phospho-alpha-D-ribose 1-diphosphate</name>
        <dbReference type="ChEBI" id="CHEBI:58017"/>
    </ligand>
</feature>
<feature type="binding site" evidence="1">
    <location>
        <position position="112"/>
    </location>
    <ligand>
        <name>anthranilate</name>
        <dbReference type="ChEBI" id="CHEBI:16567"/>
        <label>1</label>
    </ligand>
</feature>
<feature type="binding site" evidence="1">
    <location>
        <position position="121"/>
    </location>
    <ligand>
        <name>5-phospho-alpha-D-ribose 1-diphosphate</name>
        <dbReference type="ChEBI" id="CHEBI:58017"/>
    </ligand>
</feature>
<feature type="binding site" evidence="1">
    <location>
        <position position="167"/>
    </location>
    <ligand>
        <name>anthranilate</name>
        <dbReference type="ChEBI" id="CHEBI:16567"/>
        <label>2</label>
    </ligand>
</feature>
<feature type="binding site" evidence="1">
    <location>
        <position position="225"/>
    </location>
    <ligand>
        <name>Mg(2+)</name>
        <dbReference type="ChEBI" id="CHEBI:18420"/>
        <label>2</label>
    </ligand>
</feature>
<feature type="binding site" evidence="1">
    <location>
        <position position="226"/>
    </location>
    <ligand>
        <name>Mg(2+)</name>
        <dbReference type="ChEBI" id="CHEBI:18420"/>
        <label>1</label>
    </ligand>
</feature>
<feature type="binding site" evidence="1">
    <location>
        <position position="226"/>
    </location>
    <ligand>
        <name>Mg(2+)</name>
        <dbReference type="ChEBI" id="CHEBI:18420"/>
        <label>2</label>
    </ligand>
</feature>
<proteinExistence type="inferred from homology"/>
<dbReference type="EC" id="2.4.2.18" evidence="1"/>
<dbReference type="EMBL" id="AE007869">
    <property type="protein sequence ID" value="AAK87458.1"/>
    <property type="molecule type" value="Genomic_DNA"/>
</dbReference>
<dbReference type="PIR" id="A97563">
    <property type="entry name" value="A97563"/>
</dbReference>
<dbReference type="PIR" id="AI2783">
    <property type="entry name" value="AI2783"/>
</dbReference>
<dbReference type="RefSeq" id="NP_354673.1">
    <property type="nucleotide sequence ID" value="NC_003062.2"/>
</dbReference>
<dbReference type="RefSeq" id="WP_010971800.1">
    <property type="nucleotide sequence ID" value="NC_003062.2"/>
</dbReference>
<dbReference type="SMR" id="Q8UER8"/>
<dbReference type="STRING" id="176299.Atu1687"/>
<dbReference type="EnsemblBacteria" id="AAK87458">
    <property type="protein sequence ID" value="AAK87458"/>
    <property type="gene ID" value="Atu1687"/>
</dbReference>
<dbReference type="GeneID" id="1133725"/>
<dbReference type="KEGG" id="atu:Atu1687"/>
<dbReference type="PATRIC" id="fig|176299.10.peg.1701"/>
<dbReference type="eggNOG" id="COG0547">
    <property type="taxonomic scope" value="Bacteria"/>
</dbReference>
<dbReference type="HOGENOM" id="CLU_034315_2_1_5"/>
<dbReference type="OrthoDB" id="9806430at2"/>
<dbReference type="PhylomeDB" id="Q8UER8"/>
<dbReference type="BioCyc" id="AGRO:ATU1687-MONOMER"/>
<dbReference type="UniPathway" id="UPA00035">
    <property type="reaction ID" value="UER00041"/>
</dbReference>
<dbReference type="Proteomes" id="UP000000813">
    <property type="component" value="Chromosome circular"/>
</dbReference>
<dbReference type="GO" id="GO:0005829">
    <property type="term" value="C:cytosol"/>
    <property type="evidence" value="ECO:0007669"/>
    <property type="project" value="TreeGrafter"/>
</dbReference>
<dbReference type="GO" id="GO:0004048">
    <property type="term" value="F:anthranilate phosphoribosyltransferase activity"/>
    <property type="evidence" value="ECO:0007669"/>
    <property type="project" value="UniProtKB-UniRule"/>
</dbReference>
<dbReference type="GO" id="GO:0000287">
    <property type="term" value="F:magnesium ion binding"/>
    <property type="evidence" value="ECO:0007669"/>
    <property type="project" value="UniProtKB-UniRule"/>
</dbReference>
<dbReference type="GO" id="GO:0000162">
    <property type="term" value="P:L-tryptophan biosynthetic process"/>
    <property type="evidence" value="ECO:0007669"/>
    <property type="project" value="UniProtKB-UniRule"/>
</dbReference>
<dbReference type="FunFam" id="3.40.1030.10:FF:000002">
    <property type="entry name" value="Anthranilate phosphoribosyltransferase"/>
    <property type="match status" value="1"/>
</dbReference>
<dbReference type="Gene3D" id="3.40.1030.10">
    <property type="entry name" value="Nucleoside phosphorylase/phosphoribosyltransferase catalytic domain"/>
    <property type="match status" value="1"/>
</dbReference>
<dbReference type="Gene3D" id="1.20.970.10">
    <property type="entry name" value="Transferase, Pyrimidine Nucleoside Phosphorylase, Chain C"/>
    <property type="match status" value="1"/>
</dbReference>
<dbReference type="HAMAP" id="MF_00211">
    <property type="entry name" value="TrpD"/>
    <property type="match status" value="1"/>
</dbReference>
<dbReference type="InterPro" id="IPR005940">
    <property type="entry name" value="Anthranilate_Pribosyl_Tfrase"/>
</dbReference>
<dbReference type="InterPro" id="IPR000312">
    <property type="entry name" value="Glycosyl_Trfase_fam3"/>
</dbReference>
<dbReference type="InterPro" id="IPR017459">
    <property type="entry name" value="Glycosyl_Trfase_fam3_N_dom"/>
</dbReference>
<dbReference type="InterPro" id="IPR036320">
    <property type="entry name" value="Glycosyl_Trfase_fam3_N_dom_sf"/>
</dbReference>
<dbReference type="InterPro" id="IPR035902">
    <property type="entry name" value="Nuc_phospho_transferase"/>
</dbReference>
<dbReference type="NCBIfam" id="TIGR01245">
    <property type="entry name" value="trpD"/>
    <property type="match status" value="1"/>
</dbReference>
<dbReference type="PANTHER" id="PTHR43285">
    <property type="entry name" value="ANTHRANILATE PHOSPHORIBOSYLTRANSFERASE"/>
    <property type="match status" value="1"/>
</dbReference>
<dbReference type="PANTHER" id="PTHR43285:SF2">
    <property type="entry name" value="ANTHRANILATE PHOSPHORIBOSYLTRANSFERASE"/>
    <property type="match status" value="1"/>
</dbReference>
<dbReference type="Pfam" id="PF02885">
    <property type="entry name" value="Glycos_trans_3N"/>
    <property type="match status" value="1"/>
</dbReference>
<dbReference type="Pfam" id="PF00591">
    <property type="entry name" value="Glycos_transf_3"/>
    <property type="match status" value="1"/>
</dbReference>
<dbReference type="SUPFAM" id="SSF52418">
    <property type="entry name" value="Nucleoside phosphorylase/phosphoribosyltransferase catalytic domain"/>
    <property type="match status" value="1"/>
</dbReference>
<dbReference type="SUPFAM" id="SSF47648">
    <property type="entry name" value="Nucleoside phosphorylase/phosphoribosyltransferase N-terminal domain"/>
    <property type="match status" value="1"/>
</dbReference>
<reference key="1">
    <citation type="journal article" date="2001" name="Science">
        <title>The genome of the natural genetic engineer Agrobacterium tumefaciens C58.</title>
        <authorList>
            <person name="Wood D.W."/>
            <person name="Setubal J.C."/>
            <person name="Kaul R."/>
            <person name="Monks D.E."/>
            <person name="Kitajima J.P."/>
            <person name="Okura V.K."/>
            <person name="Zhou Y."/>
            <person name="Chen L."/>
            <person name="Wood G.E."/>
            <person name="Almeida N.F. Jr."/>
            <person name="Woo L."/>
            <person name="Chen Y."/>
            <person name="Paulsen I.T."/>
            <person name="Eisen J.A."/>
            <person name="Karp P.D."/>
            <person name="Bovee D. Sr."/>
            <person name="Chapman P."/>
            <person name="Clendenning J."/>
            <person name="Deatherage G."/>
            <person name="Gillet W."/>
            <person name="Grant C."/>
            <person name="Kutyavin T."/>
            <person name="Levy R."/>
            <person name="Li M.-J."/>
            <person name="McClelland E."/>
            <person name="Palmieri A."/>
            <person name="Raymond C."/>
            <person name="Rouse G."/>
            <person name="Saenphimmachak C."/>
            <person name="Wu Z."/>
            <person name="Romero P."/>
            <person name="Gordon D."/>
            <person name="Zhang S."/>
            <person name="Yoo H."/>
            <person name="Tao Y."/>
            <person name="Biddle P."/>
            <person name="Jung M."/>
            <person name="Krespan W."/>
            <person name="Perry M."/>
            <person name="Gordon-Kamm B."/>
            <person name="Liao L."/>
            <person name="Kim S."/>
            <person name="Hendrick C."/>
            <person name="Zhao Z.-Y."/>
            <person name="Dolan M."/>
            <person name="Chumley F."/>
            <person name="Tingey S.V."/>
            <person name="Tomb J.-F."/>
            <person name="Gordon M.P."/>
            <person name="Olson M.V."/>
            <person name="Nester E.W."/>
        </authorList>
    </citation>
    <scope>NUCLEOTIDE SEQUENCE [LARGE SCALE GENOMIC DNA]</scope>
    <source>
        <strain>C58 / ATCC 33970</strain>
    </source>
</reference>
<reference key="2">
    <citation type="journal article" date="2001" name="Science">
        <title>Genome sequence of the plant pathogen and biotechnology agent Agrobacterium tumefaciens C58.</title>
        <authorList>
            <person name="Goodner B."/>
            <person name="Hinkle G."/>
            <person name="Gattung S."/>
            <person name="Miller N."/>
            <person name="Blanchard M."/>
            <person name="Qurollo B."/>
            <person name="Goldman B.S."/>
            <person name="Cao Y."/>
            <person name="Askenazi M."/>
            <person name="Halling C."/>
            <person name="Mullin L."/>
            <person name="Houmiel K."/>
            <person name="Gordon J."/>
            <person name="Vaudin M."/>
            <person name="Iartchouk O."/>
            <person name="Epp A."/>
            <person name="Liu F."/>
            <person name="Wollam C."/>
            <person name="Allinger M."/>
            <person name="Doughty D."/>
            <person name="Scott C."/>
            <person name="Lappas C."/>
            <person name="Markelz B."/>
            <person name="Flanagan C."/>
            <person name="Crowell C."/>
            <person name="Gurson J."/>
            <person name="Lomo C."/>
            <person name="Sear C."/>
            <person name="Strub G."/>
            <person name="Cielo C."/>
            <person name="Slater S."/>
        </authorList>
    </citation>
    <scope>NUCLEOTIDE SEQUENCE [LARGE SCALE GENOMIC DNA]</scope>
    <source>
        <strain>C58 / ATCC 33970</strain>
    </source>
</reference>
<accession>Q8UER8</accession>
<comment type="function">
    <text evidence="1">Catalyzes the transfer of the phosphoribosyl group of 5-phosphorylribose-1-pyrophosphate (PRPP) to anthranilate to yield N-(5'-phosphoribosyl)-anthranilate (PRA).</text>
</comment>
<comment type="catalytic activity">
    <reaction evidence="1">
        <text>N-(5-phospho-beta-D-ribosyl)anthranilate + diphosphate = 5-phospho-alpha-D-ribose 1-diphosphate + anthranilate</text>
        <dbReference type="Rhea" id="RHEA:11768"/>
        <dbReference type="ChEBI" id="CHEBI:16567"/>
        <dbReference type="ChEBI" id="CHEBI:18277"/>
        <dbReference type="ChEBI" id="CHEBI:33019"/>
        <dbReference type="ChEBI" id="CHEBI:58017"/>
        <dbReference type="EC" id="2.4.2.18"/>
    </reaction>
</comment>
<comment type="cofactor">
    <cofactor evidence="1">
        <name>Mg(2+)</name>
        <dbReference type="ChEBI" id="CHEBI:18420"/>
    </cofactor>
    <text evidence="1">Binds 2 magnesium ions per monomer.</text>
</comment>
<comment type="pathway">
    <text evidence="1">Amino-acid biosynthesis; L-tryptophan biosynthesis; L-tryptophan from chorismate: step 2/5.</text>
</comment>
<comment type="subunit">
    <text evidence="1">Homodimer.</text>
</comment>
<comment type="similarity">
    <text evidence="1">Belongs to the anthranilate phosphoribosyltransferase family.</text>
</comment>